<keyword id="KW-1185">Reference proteome</keyword>
<keyword id="KW-0694">RNA-binding</keyword>
<keyword id="KW-0813">Transport</keyword>
<keyword id="KW-0916">Viral movement protein</keyword>
<comment type="function">
    <text evidence="1">Cell-to-cell movement. Displays RNA-binding activity.</text>
</comment>
<comment type="subunit">
    <text evidence="1">Homodimer.</text>
</comment>
<comment type="similarity">
    <text evidence="3">Belongs to the carmovirus double gene block protein 1 family.</text>
</comment>
<feature type="chain" id="PRO_0000398305" description="Double gene block protein 1">
    <location>
        <begin position="1"/>
        <end position="61"/>
    </location>
</feature>
<feature type="region of interest" description="Disordered" evidence="2">
    <location>
        <begin position="15"/>
        <end position="45"/>
    </location>
</feature>
<feature type="region of interest" description="RNA-binding">
    <location>
        <begin position="17"/>
        <end position="35"/>
    </location>
</feature>
<feature type="compositionally biased region" description="Basic and acidic residues" evidence="2">
    <location>
        <begin position="28"/>
        <end position="37"/>
    </location>
</feature>
<gene>
    <name type="ORF">ORF2</name>
</gene>
<proteinExistence type="evidence at protein level"/>
<reference key="1">
    <citation type="submission" date="1999-10" db="EMBL/GenBank/DDBJ databases">
        <title>Infectivity of full-length cDNA of carnation mottle virus.</title>
        <authorList>
            <person name="Zhang A.P."/>
            <person name="Yue Y."/>
            <person name="Ye R."/>
            <person name="Zhu H.Q."/>
            <person name="Xu L."/>
            <person name="Yu S.Q."/>
        </authorList>
    </citation>
    <scope>NUCLEOTIDE SEQUENCE [GENOMIC RNA]</scope>
</reference>
<reference key="2">
    <citation type="journal article" date="2005" name="ChemBioChem">
        <title>Transient structural ordering of the RNA-binding domain of carnation mottle virus p7 movement protein modulates nucleic acid binding.</title>
        <authorList>
            <person name="Vilar M."/>
            <person name="Sauri A."/>
            <person name="Marcos J.F."/>
            <person name="Mingarro I."/>
            <person name="Perez-Paya E."/>
        </authorList>
    </citation>
    <scope>RNA-BINDING</scope>
</reference>
<organism>
    <name type="scientific">Carnation mottle virus (isolate China/Shanghai)</name>
    <name type="common">CarMV</name>
    <dbReference type="NCBI Taxonomy" id="652111"/>
    <lineage>
        <taxon>Viruses</taxon>
        <taxon>Riboviria</taxon>
        <taxon>Orthornavirae</taxon>
        <taxon>Kitrinoviricota</taxon>
        <taxon>Tolucaviricetes</taxon>
        <taxon>Tolivirales</taxon>
        <taxon>Tombusviridae</taxon>
        <taxon>Procedovirinae</taxon>
        <taxon>Alphacarmovirus</taxon>
        <taxon>Alphacarmovirus dianthi</taxon>
    </lineage>
</organism>
<accession>P0C777</accession>
<evidence type="ECO:0000250" key="1">
    <source>
        <dbReference type="UniProtKB" id="Q89682"/>
    </source>
</evidence>
<evidence type="ECO:0000256" key="2">
    <source>
        <dbReference type="SAM" id="MobiDB-lite"/>
    </source>
</evidence>
<evidence type="ECO:0000305" key="3"/>
<protein>
    <recommendedName>
        <fullName>Double gene block protein 1</fullName>
        <shortName>DGBp1</shortName>
    </recommendedName>
    <alternativeName>
        <fullName>Movement protein P7</fullName>
    </alternativeName>
</protein>
<organismHost>
    <name type="scientific">Dianthus barbatus</name>
    <dbReference type="NCBI Taxonomy" id="278075"/>
</organismHost>
<organismHost>
    <name type="scientific">Dianthus caryophyllus</name>
    <name type="common">Carnation</name>
    <name type="synonym">Clove pink</name>
    <dbReference type="NCBI Taxonomy" id="3570"/>
</organismHost>
<organismHost>
    <name type="scientific">Dianthus chinensis</name>
    <dbReference type="NCBI Taxonomy" id="118431"/>
</organismHost>
<organismHost>
    <name type="scientific">Dianthus superbus</name>
    <dbReference type="NCBI Taxonomy" id="288950"/>
</organismHost>
<organismHost>
    <name type="scientific">Saponaria officinalis</name>
    <name type="common">Common soapwort</name>
    <name type="synonym">Lychnis saponaria</name>
    <dbReference type="NCBI Taxonomy" id="3572"/>
</organismHost>
<name>MP1_CARMS</name>
<dbReference type="EMBL" id="AF192772">
    <property type="status" value="NOT_ANNOTATED_CDS"/>
    <property type="molecule type" value="Genomic_RNA"/>
</dbReference>
<dbReference type="Proteomes" id="UP000006709">
    <property type="component" value="Genome"/>
</dbReference>
<dbReference type="GO" id="GO:0003723">
    <property type="term" value="F:RNA binding"/>
    <property type="evidence" value="ECO:0007669"/>
    <property type="project" value="UniProtKB-KW"/>
</dbReference>
<dbReference type="GO" id="GO:0046740">
    <property type="term" value="P:transport of virus in host, cell to cell"/>
    <property type="evidence" value="ECO:0007669"/>
    <property type="project" value="UniProtKB-KW"/>
</dbReference>
<dbReference type="InterPro" id="IPR007982">
    <property type="entry name" value="Tombusvirus_movement"/>
</dbReference>
<dbReference type="Pfam" id="PF05318">
    <property type="entry name" value="Tombus_movement"/>
    <property type="match status" value="1"/>
</dbReference>
<sequence length="61" mass="6831">MDIEPEVPVVEKQMLAGNRGKQKTRRSVAKDAIRKPASDSTNGGNWVNVADKIEVHIHFNF</sequence>